<proteinExistence type="inferred from homology"/>
<keyword id="KW-0687">Ribonucleoprotein</keyword>
<keyword id="KW-0689">Ribosomal protein</keyword>
<protein>
    <recommendedName>
        <fullName evidence="1">Small ribosomal subunit protein uS9</fullName>
    </recommendedName>
    <alternativeName>
        <fullName evidence="2">30S ribosomal protein S9</fullName>
    </alternativeName>
</protein>
<gene>
    <name evidence="1" type="primary">rpsI</name>
    <name type="ordered locus">MUL_0865</name>
</gene>
<accession>A0PMD2</accession>
<reference key="1">
    <citation type="journal article" date="2007" name="Genome Res.">
        <title>Reductive evolution and niche adaptation inferred from the genome of Mycobacterium ulcerans, the causative agent of Buruli ulcer.</title>
        <authorList>
            <person name="Stinear T.P."/>
            <person name="Seemann T."/>
            <person name="Pidot S."/>
            <person name="Frigui W."/>
            <person name="Reysset G."/>
            <person name="Garnier T."/>
            <person name="Meurice G."/>
            <person name="Simon D."/>
            <person name="Bouchier C."/>
            <person name="Ma L."/>
            <person name="Tichit M."/>
            <person name="Porter J.L."/>
            <person name="Ryan J."/>
            <person name="Johnson P.D.R."/>
            <person name="Davies J.K."/>
            <person name="Jenkin G.A."/>
            <person name="Small P.L.C."/>
            <person name="Jones L.M."/>
            <person name="Tekaia F."/>
            <person name="Laval F."/>
            <person name="Daffe M."/>
            <person name="Parkhill J."/>
            <person name="Cole S.T."/>
        </authorList>
    </citation>
    <scope>NUCLEOTIDE SEQUENCE [LARGE SCALE GENOMIC DNA]</scope>
    <source>
        <strain>Agy99</strain>
    </source>
</reference>
<name>RS9_MYCUA</name>
<dbReference type="EMBL" id="CP000325">
    <property type="protein sequence ID" value="ABL03501.1"/>
    <property type="molecule type" value="Genomic_DNA"/>
</dbReference>
<dbReference type="RefSeq" id="WP_011739124.1">
    <property type="nucleotide sequence ID" value="NC_008611.1"/>
</dbReference>
<dbReference type="SMR" id="A0PMD2"/>
<dbReference type="KEGG" id="mul:MUL_0865"/>
<dbReference type="eggNOG" id="COG0103">
    <property type="taxonomic scope" value="Bacteria"/>
</dbReference>
<dbReference type="HOGENOM" id="CLU_046483_2_0_11"/>
<dbReference type="Proteomes" id="UP000000765">
    <property type="component" value="Chromosome"/>
</dbReference>
<dbReference type="GO" id="GO:0005737">
    <property type="term" value="C:cytoplasm"/>
    <property type="evidence" value="ECO:0007669"/>
    <property type="project" value="UniProtKB-ARBA"/>
</dbReference>
<dbReference type="GO" id="GO:0015935">
    <property type="term" value="C:small ribosomal subunit"/>
    <property type="evidence" value="ECO:0007669"/>
    <property type="project" value="TreeGrafter"/>
</dbReference>
<dbReference type="GO" id="GO:0003723">
    <property type="term" value="F:RNA binding"/>
    <property type="evidence" value="ECO:0007669"/>
    <property type="project" value="TreeGrafter"/>
</dbReference>
<dbReference type="GO" id="GO:0003735">
    <property type="term" value="F:structural constituent of ribosome"/>
    <property type="evidence" value="ECO:0007669"/>
    <property type="project" value="InterPro"/>
</dbReference>
<dbReference type="GO" id="GO:0006412">
    <property type="term" value="P:translation"/>
    <property type="evidence" value="ECO:0007669"/>
    <property type="project" value="UniProtKB-UniRule"/>
</dbReference>
<dbReference type="FunFam" id="3.30.230.10:FF:000001">
    <property type="entry name" value="30S ribosomal protein S9"/>
    <property type="match status" value="1"/>
</dbReference>
<dbReference type="Gene3D" id="3.30.230.10">
    <property type="match status" value="1"/>
</dbReference>
<dbReference type="HAMAP" id="MF_00532_B">
    <property type="entry name" value="Ribosomal_uS9_B"/>
    <property type="match status" value="1"/>
</dbReference>
<dbReference type="InterPro" id="IPR020568">
    <property type="entry name" value="Ribosomal_Su5_D2-typ_SF"/>
</dbReference>
<dbReference type="InterPro" id="IPR000754">
    <property type="entry name" value="Ribosomal_uS9"/>
</dbReference>
<dbReference type="InterPro" id="IPR023035">
    <property type="entry name" value="Ribosomal_uS9_bac/plastid"/>
</dbReference>
<dbReference type="InterPro" id="IPR020574">
    <property type="entry name" value="Ribosomal_uS9_CS"/>
</dbReference>
<dbReference type="InterPro" id="IPR014721">
    <property type="entry name" value="Ribsml_uS5_D2-typ_fold_subgr"/>
</dbReference>
<dbReference type="NCBIfam" id="NF001099">
    <property type="entry name" value="PRK00132.1"/>
    <property type="match status" value="1"/>
</dbReference>
<dbReference type="PANTHER" id="PTHR21569">
    <property type="entry name" value="RIBOSOMAL PROTEIN S9"/>
    <property type="match status" value="1"/>
</dbReference>
<dbReference type="PANTHER" id="PTHR21569:SF1">
    <property type="entry name" value="SMALL RIBOSOMAL SUBUNIT PROTEIN US9M"/>
    <property type="match status" value="1"/>
</dbReference>
<dbReference type="Pfam" id="PF00380">
    <property type="entry name" value="Ribosomal_S9"/>
    <property type="match status" value="1"/>
</dbReference>
<dbReference type="SUPFAM" id="SSF54211">
    <property type="entry name" value="Ribosomal protein S5 domain 2-like"/>
    <property type="match status" value="1"/>
</dbReference>
<dbReference type="PROSITE" id="PS00360">
    <property type="entry name" value="RIBOSOMAL_S9"/>
    <property type="match status" value="1"/>
</dbReference>
<sequence>MTETTPEVEVAVEAEVTYSESFVFERPIQTVGRRKEAVVRVRLVPGSGKFDLNGRSLEAYFPNKVHQQLIKAPLVTVDRLESYDIFALLHGGGPSGQAGALRLGIARALIVANPEDRPALKKACFLTRDPRATERKKYGLKKARKAPQYSKR</sequence>
<organism>
    <name type="scientific">Mycobacterium ulcerans (strain Agy99)</name>
    <dbReference type="NCBI Taxonomy" id="362242"/>
    <lineage>
        <taxon>Bacteria</taxon>
        <taxon>Bacillati</taxon>
        <taxon>Actinomycetota</taxon>
        <taxon>Actinomycetes</taxon>
        <taxon>Mycobacteriales</taxon>
        <taxon>Mycobacteriaceae</taxon>
        <taxon>Mycobacterium</taxon>
        <taxon>Mycobacterium ulcerans group</taxon>
    </lineage>
</organism>
<comment type="similarity">
    <text evidence="1">Belongs to the universal ribosomal protein uS9 family.</text>
</comment>
<feature type="chain" id="PRO_1000051264" description="Small ribosomal subunit protein uS9">
    <location>
        <begin position="1"/>
        <end position="152"/>
    </location>
</feature>
<evidence type="ECO:0000255" key="1">
    <source>
        <dbReference type="HAMAP-Rule" id="MF_00532"/>
    </source>
</evidence>
<evidence type="ECO:0000305" key="2"/>